<sequence length="157" mass="17816">MSRRHSAEKRPTEPDPLYGSTVLSKFINKVMESGKKSTARRIVYNAIEKFSKRIKAENPLEAFEQALENAKPSLEVKSRRIGGATYQVPIEIPANRRSSMAMRWIIGHSRGKAGRSMEDALASELSDCYNNQGTTIKKKDDTHRMAEANKAYAHYKW</sequence>
<organism>
    <name type="scientific">Protochlamydia amoebophila (strain UWE25)</name>
    <dbReference type="NCBI Taxonomy" id="264201"/>
    <lineage>
        <taxon>Bacteria</taxon>
        <taxon>Pseudomonadati</taxon>
        <taxon>Chlamydiota</taxon>
        <taxon>Chlamydiia</taxon>
        <taxon>Parachlamydiales</taxon>
        <taxon>Parachlamydiaceae</taxon>
        <taxon>Candidatus Protochlamydia</taxon>
    </lineage>
</organism>
<name>RS7_PARUW</name>
<accession>Q6MER7</accession>
<feature type="chain" id="PRO_0000124313" description="Small ribosomal subunit protein uS7">
    <location>
        <begin position="1"/>
        <end position="157"/>
    </location>
</feature>
<gene>
    <name evidence="1" type="primary">rpsG</name>
    <name type="ordered locus">pc0208</name>
</gene>
<evidence type="ECO:0000255" key="1">
    <source>
        <dbReference type="HAMAP-Rule" id="MF_00480"/>
    </source>
</evidence>
<evidence type="ECO:0000305" key="2"/>
<keyword id="KW-1185">Reference proteome</keyword>
<keyword id="KW-0687">Ribonucleoprotein</keyword>
<keyword id="KW-0689">Ribosomal protein</keyword>
<keyword id="KW-0694">RNA-binding</keyword>
<keyword id="KW-0699">rRNA-binding</keyword>
<keyword id="KW-0820">tRNA-binding</keyword>
<protein>
    <recommendedName>
        <fullName evidence="1">Small ribosomal subunit protein uS7</fullName>
    </recommendedName>
    <alternativeName>
        <fullName evidence="2">30S ribosomal protein S7</fullName>
    </alternativeName>
</protein>
<comment type="function">
    <text evidence="1">One of the primary rRNA binding proteins, it binds directly to 16S rRNA where it nucleates assembly of the head domain of the 30S subunit. Is located at the subunit interface close to the decoding center, probably blocks exit of the E-site tRNA.</text>
</comment>
<comment type="subunit">
    <text evidence="1">Part of the 30S ribosomal subunit. Contacts proteins S9 and S11.</text>
</comment>
<comment type="similarity">
    <text evidence="1">Belongs to the universal ribosomal protein uS7 family.</text>
</comment>
<dbReference type="EMBL" id="BX908798">
    <property type="protein sequence ID" value="CAF22932.1"/>
    <property type="molecule type" value="Genomic_DNA"/>
</dbReference>
<dbReference type="RefSeq" id="WP_011174758.1">
    <property type="nucleotide sequence ID" value="NC_005861.2"/>
</dbReference>
<dbReference type="SMR" id="Q6MER7"/>
<dbReference type="STRING" id="264201.pc0208"/>
<dbReference type="KEGG" id="pcu:PC_RS01020"/>
<dbReference type="eggNOG" id="COG0049">
    <property type="taxonomic scope" value="Bacteria"/>
</dbReference>
<dbReference type="HOGENOM" id="CLU_072226_1_1_0"/>
<dbReference type="OrthoDB" id="9807653at2"/>
<dbReference type="Proteomes" id="UP000000529">
    <property type="component" value="Chromosome"/>
</dbReference>
<dbReference type="GO" id="GO:0015935">
    <property type="term" value="C:small ribosomal subunit"/>
    <property type="evidence" value="ECO:0007669"/>
    <property type="project" value="InterPro"/>
</dbReference>
<dbReference type="GO" id="GO:0019843">
    <property type="term" value="F:rRNA binding"/>
    <property type="evidence" value="ECO:0007669"/>
    <property type="project" value="UniProtKB-UniRule"/>
</dbReference>
<dbReference type="GO" id="GO:0003735">
    <property type="term" value="F:structural constituent of ribosome"/>
    <property type="evidence" value="ECO:0007669"/>
    <property type="project" value="InterPro"/>
</dbReference>
<dbReference type="GO" id="GO:0000049">
    <property type="term" value="F:tRNA binding"/>
    <property type="evidence" value="ECO:0007669"/>
    <property type="project" value="UniProtKB-UniRule"/>
</dbReference>
<dbReference type="GO" id="GO:0006412">
    <property type="term" value="P:translation"/>
    <property type="evidence" value="ECO:0007669"/>
    <property type="project" value="UniProtKB-UniRule"/>
</dbReference>
<dbReference type="CDD" id="cd14869">
    <property type="entry name" value="uS7_Bacteria"/>
    <property type="match status" value="1"/>
</dbReference>
<dbReference type="FunFam" id="1.10.455.10:FF:000001">
    <property type="entry name" value="30S ribosomal protein S7"/>
    <property type="match status" value="1"/>
</dbReference>
<dbReference type="Gene3D" id="1.10.455.10">
    <property type="entry name" value="Ribosomal protein S7 domain"/>
    <property type="match status" value="1"/>
</dbReference>
<dbReference type="HAMAP" id="MF_00480_B">
    <property type="entry name" value="Ribosomal_uS7_B"/>
    <property type="match status" value="1"/>
</dbReference>
<dbReference type="InterPro" id="IPR000235">
    <property type="entry name" value="Ribosomal_uS7"/>
</dbReference>
<dbReference type="InterPro" id="IPR005717">
    <property type="entry name" value="Ribosomal_uS7_bac/org-type"/>
</dbReference>
<dbReference type="InterPro" id="IPR020606">
    <property type="entry name" value="Ribosomal_uS7_CS"/>
</dbReference>
<dbReference type="InterPro" id="IPR023798">
    <property type="entry name" value="Ribosomal_uS7_dom"/>
</dbReference>
<dbReference type="InterPro" id="IPR036823">
    <property type="entry name" value="Ribosomal_uS7_dom_sf"/>
</dbReference>
<dbReference type="NCBIfam" id="TIGR01029">
    <property type="entry name" value="rpsG_bact"/>
    <property type="match status" value="1"/>
</dbReference>
<dbReference type="PANTHER" id="PTHR11205">
    <property type="entry name" value="RIBOSOMAL PROTEIN S7"/>
    <property type="match status" value="1"/>
</dbReference>
<dbReference type="Pfam" id="PF00177">
    <property type="entry name" value="Ribosomal_S7"/>
    <property type="match status" value="1"/>
</dbReference>
<dbReference type="PIRSF" id="PIRSF002122">
    <property type="entry name" value="RPS7p_RPS7a_RPS5e_RPS7o"/>
    <property type="match status" value="1"/>
</dbReference>
<dbReference type="SUPFAM" id="SSF47973">
    <property type="entry name" value="Ribosomal protein S7"/>
    <property type="match status" value="1"/>
</dbReference>
<dbReference type="PROSITE" id="PS00052">
    <property type="entry name" value="RIBOSOMAL_S7"/>
    <property type="match status" value="1"/>
</dbReference>
<proteinExistence type="inferred from homology"/>
<reference key="1">
    <citation type="journal article" date="2004" name="Science">
        <title>Illuminating the evolutionary history of chlamydiae.</title>
        <authorList>
            <person name="Horn M."/>
            <person name="Collingro A."/>
            <person name="Schmitz-Esser S."/>
            <person name="Beier C.L."/>
            <person name="Purkhold U."/>
            <person name="Fartmann B."/>
            <person name="Brandt P."/>
            <person name="Nyakatura G.J."/>
            <person name="Droege M."/>
            <person name="Frishman D."/>
            <person name="Rattei T."/>
            <person name="Mewes H.-W."/>
            <person name="Wagner M."/>
        </authorList>
    </citation>
    <scope>NUCLEOTIDE SEQUENCE [LARGE SCALE GENOMIC DNA]</scope>
    <source>
        <strain>UWE25</strain>
    </source>
</reference>